<accession>A7FKV1</accession>
<protein>
    <recommendedName>
        <fullName evidence="1">Endoribonuclease YbeY</fullName>
        <ecNumber evidence="1">3.1.-.-</ecNumber>
    </recommendedName>
</protein>
<keyword id="KW-0963">Cytoplasm</keyword>
<keyword id="KW-0255">Endonuclease</keyword>
<keyword id="KW-0378">Hydrolase</keyword>
<keyword id="KW-0479">Metal-binding</keyword>
<keyword id="KW-0540">Nuclease</keyword>
<keyword id="KW-0690">Ribosome biogenesis</keyword>
<keyword id="KW-0698">rRNA processing</keyword>
<keyword id="KW-0862">Zinc</keyword>
<comment type="function">
    <text evidence="1">Single strand-specific metallo-endoribonuclease involved in late-stage 70S ribosome quality control and in maturation of the 3' terminus of the 16S rRNA.</text>
</comment>
<comment type="cofactor">
    <cofactor evidence="1">
        <name>Zn(2+)</name>
        <dbReference type="ChEBI" id="CHEBI:29105"/>
    </cofactor>
    <text evidence="1">Binds 1 zinc ion.</text>
</comment>
<comment type="subcellular location">
    <subcellularLocation>
        <location evidence="1">Cytoplasm</location>
    </subcellularLocation>
</comment>
<comment type="similarity">
    <text evidence="1">Belongs to the endoribonuclease YbeY family.</text>
</comment>
<reference key="1">
    <citation type="journal article" date="2007" name="PLoS Genet.">
        <title>The complete genome sequence of Yersinia pseudotuberculosis IP31758, the causative agent of Far East scarlet-like fever.</title>
        <authorList>
            <person name="Eppinger M."/>
            <person name="Rosovitz M.J."/>
            <person name="Fricke W.F."/>
            <person name="Rasko D.A."/>
            <person name="Kokorina G."/>
            <person name="Fayolle C."/>
            <person name="Lindler L.E."/>
            <person name="Carniel E."/>
            <person name="Ravel J."/>
        </authorList>
    </citation>
    <scope>NUCLEOTIDE SEQUENCE [LARGE SCALE GENOMIC DNA]</scope>
    <source>
        <strain>IP 31758</strain>
    </source>
</reference>
<gene>
    <name evidence="1" type="primary">ybeY</name>
    <name type="ordered locus">YpsIP31758_2917</name>
</gene>
<proteinExistence type="inferred from homology"/>
<sequence length="157" mass="17731">MSQVILDLQIACADSQGLPTEGDFQRWLEAVLPLFQPVSEVTIRLVDEAESHDLNLTYRGKDKSTNVLSFPFEAPPEIELPLLGDLIICRQVVEKEAIEQEKALLAHWAHMVVHGSLHLLGYDHIDDDEAEEMELIETEIMHGLGYPDPYISEKDPD</sequence>
<feature type="chain" id="PRO_1000057077" description="Endoribonuclease YbeY">
    <location>
        <begin position="1"/>
        <end position="157"/>
    </location>
</feature>
<feature type="binding site" evidence="1">
    <location>
        <position position="114"/>
    </location>
    <ligand>
        <name>Zn(2+)</name>
        <dbReference type="ChEBI" id="CHEBI:29105"/>
        <note>catalytic</note>
    </ligand>
</feature>
<feature type="binding site" evidence="1">
    <location>
        <position position="118"/>
    </location>
    <ligand>
        <name>Zn(2+)</name>
        <dbReference type="ChEBI" id="CHEBI:29105"/>
        <note>catalytic</note>
    </ligand>
</feature>
<feature type="binding site" evidence="1">
    <location>
        <position position="124"/>
    </location>
    <ligand>
        <name>Zn(2+)</name>
        <dbReference type="ChEBI" id="CHEBI:29105"/>
        <note>catalytic</note>
    </ligand>
</feature>
<name>YBEY_YERP3</name>
<organism>
    <name type="scientific">Yersinia pseudotuberculosis serotype O:1b (strain IP 31758)</name>
    <dbReference type="NCBI Taxonomy" id="349747"/>
    <lineage>
        <taxon>Bacteria</taxon>
        <taxon>Pseudomonadati</taxon>
        <taxon>Pseudomonadota</taxon>
        <taxon>Gammaproteobacteria</taxon>
        <taxon>Enterobacterales</taxon>
        <taxon>Yersiniaceae</taxon>
        <taxon>Yersinia</taxon>
    </lineage>
</organism>
<evidence type="ECO:0000255" key="1">
    <source>
        <dbReference type="HAMAP-Rule" id="MF_00009"/>
    </source>
</evidence>
<dbReference type="EC" id="3.1.-.-" evidence="1"/>
<dbReference type="EMBL" id="CP000720">
    <property type="protein sequence ID" value="ABS48103.1"/>
    <property type="molecule type" value="Genomic_DNA"/>
</dbReference>
<dbReference type="RefSeq" id="WP_011191934.1">
    <property type="nucleotide sequence ID" value="NC_009708.1"/>
</dbReference>
<dbReference type="SMR" id="A7FKV1"/>
<dbReference type="GeneID" id="96664631"/>
<dbReference type="KEGG" id="ypi:YpsIP31758_2917"/>
<dbReference type="HOGENOM" id="CLU_106710_0_1_6"/>
<dbReference type="Proteomes" id="UP000002412">
    <property type="component" value="Chromosome"/>
</dbReference>
<dbReference type="GO" id="GO:0005737">
    <property type="term" value="C:cytoplasm"/>
    <property type="evidence" value="ECO:0007669"/>
    <property type="project" value="UniProtKB-SubCell"/>
</dbReference>
<dbReference type="GO" id="GO:0004222">
    <property type="term" value="F:metalloendopeptidase activity"/>
    <property type="evidence" value="ECO:0007669"/>
    <property type="project" value="InterPro"/>
</dbReference>
<dbReference type="GO" id="GO:0004521">
    <property type="term" value="F:RNA endonuclease activity"/>
    <property type="evidence" value="ECO:0007669"/>
    <property type="project" value="UniProtKB-UniRule"/>
</dbReference>
<dbReference type="GO" id="GO:0008270">
    <property type="term" value="F:zinc ion binding"/>
    <property type="evidence" value="ECO:0007669"/>
    <property type="project" value="UniProtKB-UniRule"/>
</dbReference>
<dbReference type="GO" id="GO:0006364">
    <property type="term" value="P:rRNA processing"/>
    <property type="evidence" value="ECO:0007669"/>
    <property type="project" value="UniProtKB-UniRule"/>
</dbReference>
<dbReference type="Gene3D" id="3.40.390.30">
    <property type="entry name" value="Metalloproteases ('zincins'), catalytic domain"/>
    <property type="match status" value="1"/>
</dbReference>
<dbReference type="HAMAP" id="MF_00009">
    <property type="entry name" value="Endoribonucl_YbeY"/>
    <property type="match status" value="1"/>
</dbReference>
<dbReference type="InterPro" id="IPR023091">
    <property type="entry name" value="MetalPrtase_cat_dom_sf_prd"/>
</dbReference>
<dbReference type="InterPro" id="IPR002036">
    <property type="entry name" value="YbeY"/>
</dbReference>
<dbReference type="InterPro" id="IPR020549">
    <property type="entry name" value="YbeY_CS"/>
</dbReference>
<dbReference type="NCBIfam" id="TIGR00043">
    <property type="entry name" value="rRNA maturation RNase YbeY"/>
    <property type="match status" value="1"/>
</dbReference>
<dbReference type="PANTHER" id="PTHR46986">
    <property type="entry name" value="ENDORIBONUCLEASE YBEY, CHLOROPLASTIC"/>
    <property type="match status" value="1"/>
</dbReference>
<dbReference type="PANTHER" id="PTHR46986:SF1">
    <property type="entry name" value="ENDORIBONUCLEASE YBEY, CHLOROPLASTIC"/>
    <property type="match status" value="1"/>
</dbReference>
<dbReference type="Pfam" id="PF02130">
    <property type="entry name" value="YbeY"/>
    <property type="match status" value="1"/>
</dbReference>
<dbReference type="SUPFAM" id="SSF55486">
    <property type="entry name" value="Metalloproteases ('zincins'), catalytic domain"/>
    <property type="match status" value="1"/>
</dbReference>
<dbReference type="PROSITE" id="PS01306">
    <property type="entry name" value="UPF0054"/>
    <property type="match status" value="1"/>
</dbReference>